<accession>B5R276</accession>
<feature type="chain" id="PRO_1000128666" description="Probable 4-amino-4-deoxy-L-arabinose-phosphoundecaprenol flippase subunit ArnF">
    <location>
        <begin position="1"/>
        <end position="125"/>
    </location>
</feature>
<feature type="topological domain" description="Cytoplasmic" evidence="1">
    <location>
        <begin position="1"/>
        <end position="2"/>
    </location>
</feature>
<feature type="transmembrane region" description="Helical" evidence="1">
    <location>
        <begin position="3"/>
        <end position="23"/>
    </location>
</feature>
<feature type="topological domain" description="Periplasmic" evidence="1">
    <location>
        <begin position="24"/>
        <end position="33"/>
    </location>
</feature>
<feature type="transmembrane region" description="Helical" evidence="1">
    <location>
        <begin position="34"/>
        <end position="54"/>
    </location>
</feature>
<feature type="topological domain" description="Cytoplasmic" evidence="1">
    <location>
        <begin position="55"/>
        <end position="76"/>
    </location>
</feature>
<feature type="transmembrane region" description="Helical" evidence="1">
    <location>
        <begin position="77"/>
        <end position="97"/>
    </location>
</feature>
<feature type="topological domain" description="Periplasmic" evidence="1">
    <location>
        <begin position="98"/>
        <end position="100"/>
    </location>
</feature>
<feature type="transmembrane region" description="Helical" evidence="1">
    <location>
        <begin position="101"/>
        <end position="121"/>
    </location>
</feature>
<feature type="topological domain" description="Cytoplasmic" evidence="1">
    <location>
        <begin position="122"/>
        <end position="125"/>
    </location>
</feature>
<comment type="function">
    <text evidence="1">Translocates 4-amino-4-deoxy-L-arabinose-phosphoundecaprenol (alpha-L-Ara4N-phosphoundecaprenol) from the cytoplasmic to the periplasmic side of the inner membrane.</text>
</comment>
<comment type="pathway">
    <text evidence="1">Bacterial outer membrane biogenesis; lipopolysaccharide biosynthesis.</text>
</comment>
<comment type="subunit">
    <text evidence="1">Heterodimer of ArnE and ArnF.</text>
</comment>
<comment type="subcellular location">
    <subcellularLocation>
        <location evidence="1">Cell inner membrane</location>
        <topology evidence="1">Multi-pass membrane protein</topology>
    </subcellularLocation>
</comment>
<comment type="similarity">
    <text evidence="1">Belongs to the ArnF family.</text>
</comment>
<gene>
    <name evidence="1" type="primary">arnF</name>
    <name type="ordered locus">SEN2285</name>
</gene>
<proteinExistence type="inferred from homology"/>
<protein>
    <recommendedName>
        <fullName evidence="1">Probable 4-amino-4-deoxy-L-arabinose-phosphoundecaprenol flippase subunit ArnF</fullName>
        <shortName evidence="1">L-Ara4N-phosphoundecaprenol flippase subunit ArnF</shortName>
    </recommendedName>
    <alternativeName>
        <fullName evidence="1">Undecaprenyl phosphate-aminoarabinose flippase subunit ArnF</fullName>
    </alternativeName>
</protein>
<organism>
    <name type="scientific">Salmonella enteritidis PT4 (strain P125109)</name>
    <dbReference type="NCBI Taxonomy" id="550537"/>
    <lineage>
        <taxon>Bacteria</taxon>
        <taxon>Pseudomonadati</taxon>
        <taxon>Pseudomonadota</taxon>
        <taxon>Gammaproteobacteria</taxon>
        <taxon>Enterobacterales</taxon>
        <taxon>Enterobacteriaceae</taxon>
        <taxon>Salmonella</taxon>
    </lineage>
</organism>
<evidence type="ECO:0000255" key="1">
    <source>
        <dbReference type="HAMAP-Rule" id="MF_00538"/>
    </source>
</evidence>
<dbReference type="EMBL" id="AM933172">
    <property type="protein sequence ID" value="CAR33869.1"/>
    <property type="molecule type" value="Genomic_DNA"/>
</dbReference>
<dbReference type="RefSeq" id="WP_000538696.1">
    <property type="nucleotide sequence ID" value="NC_011294.1"/>
</dbReference>
<dbReference type="KEGG" id="set:SEN2285"/>
<dbReference type="HOGENOM" id="CLU_131462_1_0_6"/>
<dbReference type="UniPathway" id="UPA00030"/>
<dbReference type="Proteomes" id="UP000000613">
    <property type="component" value="Chromosome"/>
</dbReference>
<dbReference type="GO" id="GO:0005886">
    <property type="term" value="C:plasma membrane"/>
    <property type="evidence" value="ECO:0007669"/>
    <property type="project" value="UniProtKB-SubCell"/>
</dbReference>
<dbReference type="GO" id="GO:1901505">
    <property type="term" value="F:carbohydrate derivative transmembrane transporter activity"/>
    <property type="evidence" value="ECO:0007669"/>
    <property type="project" value="InterPro"/>
</dbReference>
<dbReference type="GO" id="GO:0009245">
    <property type="term" value="P:lipid A biosynthetic process"/>
    <property type="evidence" value="ECO:0007669"/>
    <property type="project" value="UniProtKB-UniRule"/>
</dbReference>
<dbReference type="GO" id="GO:0009103">
    <property type="term" value="P:lipopolysaccharide biosynthetic process"/>
    <property type="evidence" value="ECO:0007669"/>
    <property type="project" value="UniProtKB-UniRule"/>
</dbReference>
<dbReference type="Gene3D" id="1.10.3730.20">
    <property type="match status" value="1"/>
</dbReference>
<dbReference type="HAMAP" id="MF_00538">
    <property type="entry name" value="Flippase_ArnF"/>
    <property type="match status" value="1"/>
</dbReference>
<dbReference type="InterPro" id="IPR022832">
    <property type="entry name" value="Flippase_ArnF"/>
</dbReference>
<dbReference type="InterPro" id="IPR000390">
    <property type="entry name" value="Small_drug/metabolite_transptr"/>
</dbReference>
<dbReference type="NCBIfam" id="NF002816">
    <property type="entry name" value="PRK02971.1-2"/>
    <property type="match status" value="1"/>
</dbReference>
<dbReference type="PANTHER" id="PTHR30561:SF9">
    <property type="entry name" value="4-AMINO-4-DEOXY-L-ARABINOSE-PHOSPHOUNDECAPRENOL FLIPPASE SUBUNIT ARNF-RELATED"/>
    <property type="match status" value="1"/>
</dbReference>
<dbReference type="PANTHER" id="PTHR30561">
    <property type="entry name" value="SMR FAMILY PROTON-DEPENDENT DRUG EFFLUX TRANSPORTER SUGE"/>
    <property type="match status" value="1"/>
</dbReference>
<name>ARNF_SALEP</name>
<reference key="1">
    <citation type="journal article" date="2008" name="Genome Res.">
        <title>Comparative genome analysis of Salmonella enteritidis PT4 and Salmonella gallinarum 287/91 provides insights into evolutionary and host adaptation pathways.</title>
        <authorList>
            <person name="Thomson N.R."/>
            <person name="Clayton D.J."/>
            <person name="Windhorst D."/>
            <person name="Vernikos G."/>
            <person name="Davidson S."/>
            <person name="Churcher C."/>
            <person name="Quail M.A."/>
            <person name="Stevens M."/>
            <person name="Jones M.A."/>
            <person name="Watson M."/>
            <person name="Barron A."/>
            <person name="Layton A."/>
            <person name="Pickard D."/>
            <person name="Kingsley R.A."/>
            <person name="Bignell A."/>
            <person name="Clark L."/>
            <person name="Harris B."/>
            <person name="Ormond D."/>
            <person name="Abdellah Z."/>
            <person name="Brooks K."/>
            <person name="Cherevach I."/>
            <person name="Chillingworth T."/>
            <person name="Woodward J."/>
            <person name="Norberczak H."/>
            <person name="Lord A."/>
            <person name="Arrowsmith C."/>
            <person name="Jagels K."/>
            <person name="Moule S."/>
            <person name="Mungall K."/>
            <person name="Saunders M."/>
            <person name="Whitehead S."/>
            <person name="Chabalgoity J.A."/>
            <person name="Maskell D."/>
            <person name="Humphreys T."/>
            <person name="Roberts M."/>
            <person name="Barrow P.A."/>
            <person name="Dougan G."/>
            <person name="Parkhill J."/>
        </authorList>
    </citation>
    <scope>NUCLEOTIDE SEQUENCE [LARGE SCALE GENOMIC DNA]</scope>
    <source>
        <strain>P125109</strain>
    </source>
</reference>
<keyword id="KW-0997">Cell inner membrane</keyword>
<keyword id="KW-1003">Cell membrane</keyword>
<keyword id="KW-0441">Lipid A biosynthesis</keyword>
<keyword id="KW-0444">Lipid biosynthesis</keyword>
<keyword id="KW-0443">Lipid metabolism</keyword>
<keyword id="KW-0448">Lipopolysaccharide biosynthesis</keyword>
<keyword id="KW-0472">Membrane</keyword>
<keyword id="KW-0812">Transmembrane</keyword>
<keyword id="KW-1133">Transmembrane helix</keyword>
<keyword id="KW-0813">Transport</keyword>
<sequence>MGVMWGLISVAIASLAQLSLGFAMMRLPSIAHPLAFISGLGALNAATLALFAGLAGYLVSVFCWHKTLHTLALSKAYALLSLSYVLVWVASMLLPGLQGAFSLKAMLGVLCIMAGVMLIFLPARS</sequence>